<comment type="function">
    <text evidence="1">Protease that can remove conjugated ubiquitin from target proteins and polyubiquitin chains. Inhibits the degradation of target proteins by the proteasome. Cleaves preferentially 'Lys-6' and 'Lys-63'-linked ubiquitin chains. Has lower activity with 'Lys-11' and 'Lys-33'-linked ubiquitin chains, and extremely low activity with 'Lys-27', 'Lys-29' and 'Lys-48'-linked ubiquitin chains (in vitro). Plays a role in the regulation of pathways leading to NF-kappa-B activation. Plays a role in the regulation of DNA repair after double-stranded DNA breaks. Acts as a chromatin regulator via its association with the Polycomb group (PcG) multiprotein PRC1-like complex; may act by deubiquitinating components of the PRC1-like comple. Promotes cell proliferation by deubiquitinating phosphorylated E2F1x.</text>
</comment>
<comment type="catalytic activity">
    <reaction evidence="1">
        <text>Thiol-dependent hydrolysis of ester, thioester, amide, peptide and isopeptide bonds formed by the C-terminal Gly of ubiquitin (a 76-residue protein attached to proteins as an intracellular targeting signal).</text>
        <dbReference type="EC" id="3.4.19.12"/>
    </reaction>
</comment>
<comment type="subunit">
    <text evidence="1">Monomer (By similarity). Associated component of the Polycomb group (PcG) multiprotein PRC1-like complex (By similarity). Interacts with RANBP9/RANBPM (By similarity). Interacts with BRCA2 (By similarity). Interacts with CHUK/IKKA (By similarity). Interacts with NFKBIA (By similarity). Interacts with SPRY3, RAE1, MYCBP2/PAM, and KCTD6 (By similarity).</text>
</comment>
<comment type="subcellular location">
    <subcellularLocation>
        <location evidence="1">Nucleus</location>
    </subcellularLocation>
    <subcellularLocation>
        <location evidence="1">Cytoplasm</location>
    </subcellularLocation>
    <subcellularLocation>
        <location evidence="1">Chromosome</location>
    </subcellularLocation>
    <text evidence="1">Predominantly nuclear. Associates with chromatin.</text>
</comment>
<comment type="similarity">
    <text evidence="3">Belongs to the peptidase C19 family.</text>
</comment>
<organism evidence="5">
    <name type="scientific">Rattus norvegicus</name>
    <name type="common">Rat</name>
    <dbReference type="NCBI Taxonomy" id="10116"/>
    <lineage>
        <taxon>Eukaryota</taxon>
        <taxon>Metazoa</taxon>
        <taxon>Chordata</taxon>
        <taxon>Craniata</taxon>
        <taxon>Vertebrata</taxon>
        <taxon>Euteleostomi</taxon>
        <taxon>Mammalia</taxon>
        <taxon>Eutheria</taxon>
        <taxon>Euarchontoglires</taxon>
        <taxon>Glires</taxon>
        <taxon>Rodentia</taxon>
        <taxon>Myomorpha</taxon>
        <taxon>Muroidea</taxon>
        <taxon>Muridae</taxon>
        <taxon>Murinae</taxon>
        <taxon>Rattus</taxon>
    </lineage>
</organism>
<dbReference type="EC" id="3.4.19.12" evidence="1"/>
<dbReference type="EMBL" id="AC120727">
    <property type="status" value="NOT_ANNOTATED_CDS"/>
    <property type="molecule type" value="Genomic_DNA"/>
</dbReference>
<dbReference type="EMBL" id="CH474009">
    <property type="protein sequence ID" value="EDL97708.1"/>
    <property type="molecule type" value="Genomic_DNA"/>
</dbReference>
<dbReference type="EMBL" id="BC090333">
    <property type="protein sequence ID" value="AAH90333.1"/>
    <property type="molecule type" value="mRNA"/>
</dbReference>
<dbReference type="EMBL" id="BC105613">
    <property type="protein sequence ID" value="AAI05614.1"/>
    <property type="molecule type" value="mRNA"/>
</dbReference>
<dbReference type="RefSeq" id="NP_001008861.2">
    <property type="nucleotide sequence ID" value="NM_001008861.2"/>
</dbReference>
<dbReference type="PDB" id="4MEM">
    <property type="method" value="X-ray"/>
    <property type="resolution" value="2.34 A"/>
    <property type="chains" value="A/B=19-237"/>
</dbReference>
<dbReference type="PDBsum" id="4MEM"/>
<dbReference type="SMR" id="Q5D006"/>
<dbReference type="FunCoup" id="Q5D006">
    <property type="interactions" value="1811"/>
</dbReference>
<dbReference type="STRING" id="10116.ENSRNOP00000042897"/>
<dbReference type="MEROPS" id="C19.014"/>
<dbReference type="iPTMnet" id="Q5D006"/>
<dbReference type="PhosphoSitePlus" id="Q5D006"/>
<dbReference type="jPOST" id="Q5D006"/>
<dbReference type="PaxDb" id="10116-ENSRNOP00000042897"/>
<dbReference type="GeneID" id="408217"/>
<dbReference type="KEGG" id="rno:408217"/>
<dbReference type="AGR" id="RGD:1303052"/>
<dbReference type="CTD" id="8237"/>
<dbReference type="RGD" id="1303052">
    <property type="gene designation" value="Usp11"/>
</dbReference>
<dbReference type="VEuPathDB" id="HostDB:ENSRNOG00000009049"/>
<dbReference type="eggNOG" id="KOG1870">
    <property type="taxonomic scope" value="Eukaryota"/>
</dbReference>
<dbReference type="HOGENOM" id="CLU_001060_7_1_1"/>
<dbReference type="InParanoid" id="Q5D006"/>
<dbReference type="OrthoDB" id="20552at9989"/>
<dbReference type="PhylomeDB" id="Q5D006"/>
<dbReference type="TreeFam" id="TF106276"/>
<dbReference type="Reactome" id="R-RNO-5689880">
    <property type="pathway name" value="Ub-specific processing proteases"/>
</dbReference>
<dbReference type="EvolutionaryTrace" id="Q5D006"/>
<dbReference type="PRO" id="PR:Q5D006"/>
<dbReference type="Proteomes" id="UP000002494">
    <property type="component" value="Chromosome X"/>
</dbReference>
<dbReference type="Proteomes" id="UP000234681">
    <property type="component" value="Chromosome x"/>
</dbReference>
<dbReference type="Bgee" id="ENSRNOG00000009049">
    <property type="expression patterns" value="Expressed in frontal cortex and 20 other cell types or tissues"/>
</dbReference>
<dbReference type="GO" id="GO:0005694">
    <property type="term" value="C:chromosome"/>
    <property type="evidence" value="ECO:0007669"/>
    <property type="project" value="UniProtKB-SubCell"/>
</dbReference>
<dbReference type="GO" id="GO:0005737">
    <property type="term" value="C:cytoplasm"/>
    <property type="evidence" value="ECO:0007669"/>
    <property type="project" value="UniProtKB-SubCell"/>
</dbReference>
<dbReference type="GO" id="GO:0005634">
    <property type="term" value="C:nucleus"/>
    <property type="evidence" value="ECO:0000250"/>
    <property type="project" value="UniProtKB"/>
</dbReference>
<dbReference type="GO" id="GO:0004843">
    <property type="term" value="F:cysteine-type deubiquitinase activity"/>
    <property type="evidence" value="ECO:0000266"/>
    <property type="project" value="RGD"/>
</dbReference>
<dbReference type="GO" id="GO:0004197">
    <property type="term" value="F:cysteine-type endopeptidase activity"/>
    <property type="evidence" value="ECO:0000250"/>
    <property type="project" value="UniProtKB"/>
</dbReference>
<dbReference type="GO" id="GO:0001222">
    <property type="term" value="F:transcription corepressor binding"/>
    <property type="evidence" value="ECO:0000266"/>
    <property type="project" value="RGD"/>
</dbReference>
<dbReference type="GO" id="GO:0016579">
    <property type="term" value="P:protein deubiquitination"/>
    <property type="evidence" value="ECO:0000266"/>
    <property type="project" value="RGD"/>
</dbReference>
<dbReference type="GO" id="GO:0006511">
    <property type="term" value="P:ubiquitin-dependent protein catabolic process"/>
    <property type="evidence" value="ECO:0000304"/>
    <property type="project" value="RGD"/>
</dbReference>
<dbReference type="CDD" id="cd02674">
    <property type="entry name" value="Peptidase_C19R"/>
    <property type="match status" value="1"/>
</dbReference>
<dbReference type="FunFam" id="3.90.70.10:FF:000013">
    <property type="entry name" value="ubiquitin carboxyl-terminal hydrolase 15 isoform X1"/>
    <property type="match status" value="1"/>
</dbReference>
<dbReference type="Gene3D" id="3.90.70.10">
    <property type="entry name" value="Cysteine proteinases"/>
    <property type="match status" value="2"/>
</dbReference>
<dbReference type="Gene3D" id="3.30.2230.10">
    <property type="entry name" value="DUSP-like"/>
    <property type="match status" value="1"/>
</dbReference>
<dbReference type="Gene3D" id="3.10.20.90">
    <property type="entry name" value="Phosphatidylinositol 3-kinase Catalytic Subunit, Chain A, domain 1"/>
    <property type="match status" value="1"/>
</dbReference>
<dbReference type="InterPro" id="IPR035927">
    <property type="entry name" value="DUSP-like_sf"/>
</dbReference>
<dbReference type="InterPro" id="IPR038765">
    <property type="entry name" value="Papain-like_cys_pep_sf"/>
</dbReference>
<dbReference type="InterPro" id="IPR006615">
    <property type="entry name" value="Pept_C19_DUSP"/>
</dbReference>
<dbReference type="InterPro" id="IPR001394">
    <property type="entry name" value="Peptidase_C19_UCH"/>
</dbReference>
<dbReference type="InterPro" id="IPR050185">
    <property type="entry name" value="Ub_carboxyl-term_hydrolase"/>
</dbReference>
<dbReference type="InterPro" id="IPR028135">
    <property type="entry name" value="Ub_USP-typ"/>
</dbReference>
<dbReference type="InterPro" id="IPR018200">
    <property type="entry name" value="USP_CS"/>
</dbReference>
<dbReference type="InterPro" id="IPR028889">
    <property type="entry name" value="USP_dom"/>
</dbReference>
<dbReference type="PANTHER" id="PTHR21646">
    <property type="entry name" value="UBIQUITIN CARBOXYL-TERMINAL HYDROLASE"/>
    <property type="match status" value="1"/>
</dbReference>
<dbReference type="PANTHER" id="PTHR21646:SF29">
    <property type="entry name" value="UBIQUITIN CARBOXYL-TERMINAL HYDROLASE 11"/>
    <property type="match status" value="1"/>
</dbReference>
<dbReference type="Pfam" id="PF06337">
    <property type="entry name" value="DUSP"/>
    <property type="match status" value="1"/>
</dbReference>
<dbReference type="Pfam" id="PF14836">
    <property type="entry name" value="Ubiquitin_3"/>
    <property type="match status" value="1"/>
</dbReference>
<dbReference type="Pfam" id="PF00443">
    <property type="entry name" value="UCH"/>
    <property type="match status" value="1"/>
</dbReference>
<dbReference type="SMART" id="SM00695">
    <property type="entry name" value="DUSP"/>
    <property type="match status" value="1"/>
</dbReference>
<dbReference type="SUPFAM" id="SSF54001">
    <property type="entry name" value="Cysteine proteinases"/>
    <property type="match status" value="1"/>
</dbReference>
<dbReference type="SUPFAM" id="SSF143791">
    <property type="entry name" value="DUSP-like"/>
    <property type="match status" value="1"/>
</dbReference>
<dbReference type="PROSITE" id="PS51283">
    <property type="entry name" value="DUSP"/>
    <property type="match status" value="1"/>
</dbReference>
<dbReference type="PROSITE" id="PS00972">
    <property type="entry name" value="USP_1"/>
    <property type="match status" value="1"/>
</dbReference>
<dbReference type="PROSITE" id="PS00973">
    <property type="entry name" value="USP_2"/>
    <property type="match status" value="1"/>
</dbReference>
<dbReference type="PROSITE" id="PS50235">
    <property type="entry name" value="USP_3"/>
    <property type="match status" value="1"/>
</dbReference>
<keyword id="KW-0002">3D-structure</keyword>
<keyword id="KW-0007">Acetylation</keyword>
<keyword id="KW-0158">Chromosome</keyword>
<keyword id="KW-0963">Cytoplasm</keyword>
<keyword id="KW-0378">Hydrolase</keyword>
<keyword id="KW-0539">Nucleus</keyword>
<keyword id="KW-0597">Phosphoprotein</keyword>
<keyword id="KW-0645">Protease</keyword>
<keyword id="KW-1185">Reference proteome</keyword>
<keyword id="KW-0788">Thiol protease</keyword>
<keyword id="KW-0833">Ubl conjugation pathway</keyword>
<proteinExistence type="evidence at protein level"/>
<feature type="chain" id="PRO_0000435845" description="Ubiquitin carboxyl-terminal hydrolase 11">
    <location>
        <begin position="1"/>
        <end position="921"/>
    </location>
</feature>
<feature type="domain" description="DUSP" evidence="2">
    <location>
        <begin position="28"/>
        <end position="133"/>
    </location>
</feature>
<feature type="domain" description="USP" evidence="3">
    <location>
        <begin position="257"/>
        <end position="889"/>
    </location>
</feature>
<feature type="region of interest" description="Disordered" evidence="4">
    <location>
        <begin position="1"/>
        <end position="29"/>
    </location>
</feature>
<feature type="region of interest" description="Disordered" evidence="4">
    <location>
        <begin position="592"/>
        <end position="697"/>
    </location>
</feature>
<feature type="region of interest" description="Disordered" evidence="4">
    <location>
        <begin position="893"/>
        <end position="921"/>
    </location>
</feature>
<feature type="compositionally biased region" description="Low complexity" evidence="4">
    <location>
        <begin position="1"/>
        <end position="16"/>
    </location>
</feature>
<feature type="compositionally biased region" description="Acidic residues" evidence="4">
    <location>
        <begin position="597"/>
        <end position="624"/>
    </location>
</feature>
<feature type="compositionally biased region" description="Polar residues" evidence="4">
    <location>
        <begin position="657"/>
        <end position="666"/>
    </location>
</feature>
<feature type="compositionally biased region" description="Polar residues" evidence="4">
    <location>
        <begin position="676"/>
        <end position="697"/>
    </location>
</feature>
<feature type="compositionally biased region" description="Low complexity" evidence="4">
    <location>
        <begin position="895"/>
        <end position="915"/>
    </location>
</feature>
<feature type="active site" description="Nucleophile" evidence="3">
    <location>
        <position position="266"/>
    </location>
</feature>
<feature type="active site" description="Proton acceptor" evidence="3">
    <location>
        <position position="847"/>
    </location>
</feature>
<feature type="modified residue" description="N6-acetyllysine" evidence="1">
    <location>
        <position position="194"/>
    </location>
</feature>
<feature type="modified residue" description="Phosphoserine" evidence="1">
    <location>
        <position position="596"/>
    </location>
</feature>
<feature type="modified residue" description="Phosphoserine" evidence="9">
    <location>
        <position position="692"/>
    </location>
</feature>
<feature type="modified residue" description="Phosphoserine" evidence="1">
    <location>
        <position position="906"/>
    </location>
</feature>
<feature type="helix" evidence="10">
    <location>
        <begin position="30"/>
        <end position="41"/>
    </location>
</feature>
<feature type="strand" evidence="10">
    <location>
        <begin position="50"/>
        <end position="55"/>
    </location>
</feature>
<feature type="helix" evidence="10">
    <location>
        <begin position="56"/>
        <end position="68"/>
    </location>
</feature>
<feature type="helix" evidence="10">
    <location>
        <begin position="83"/>
        <end position="85"/>
    </location>
</feature>
<feature type="turn" evidence="10">
    <location>
        <begin position="89"/>
        <end position="91"/>
    </location>
</feature>
<feature type="turn" evidence="10">
    <location>
        <begin position="100"/>
        <end position="102"/>
    </location>
</feature>
<feature type="strand" evidence="10">
    <location>
        <begin position="103"/>
        <end position="108"/>
    </location>
</feature>
<feature type="helix" evidence="10">
    <location>
        <begin position="109"/>
        <end position="119"/>
    </location>
</feature>
<feature type="strand" evidence="10">
    <location>
        <begin position="129"/>
        <end position="135"/>
    </location>
</feature>
<feature type="strand" evidence="10">
    <location>
        <begin position="138"/>
        <end position="141"/>
    </location>
</feature>
<feature type="strand" evidence="10">
    <location>
        <begin position="146"/>
        <end position="152"/>
    </location>
</feature>
<feature type="strand" evidence="10">
    <location>
        <begin position="155"/>
        <end position="164"/>
    </location>
</feature>
<feature type="helix" evidence="10">
    <location>
        <begin position="170"/>
        <end position="180"/>
    </location>
</feature>
<feature type="strand" evidence="10">
    <location>
        <begin position="189"/>
        <end position="194"/>
    </location>
</feature>
<feature type="strand" evidence="10">
    <location>
        <begin position="200"/>
        <end position="202"/>
    </location>
</feature>
<feature type="turn" evidence="10">
    <location>
        <begin position="210"/>
        <end position="214"/>
    </location>
</feature>
<feature type="strand" evidence="10">
    <location>
        <begin position="220"/>
        <end position="225"/>
    </location>
</feature>
<feature type="helix" evidence="10">
    <location>
        <begin position="233"/>
        <end position="235"/>
    </location>
</feature>
<name>UBP11_RAT</name>
<evidence type="ECO:0000250" key="1">
    <source>
        <dbReference type="UniProtKB" id="P51784"/>
    </source>
</evidence>
<evidence type="ECO:0000255" key="2">
    <source>
        <dbReference type="PROSITE-ProRule" id="PRU00613"/>
    </source>
</evidence>
<evidence type="ECO:0000255" key="3">
    <source>
        <dbReference type="PROSITE-ProRule" id="PRU01035"/>
    </source>
</evidence>
<evidence type="ECO:0000256" key="4">
    <source>
        <dbReference type="SAM" id="MobiDB-lite"/>
    </source>
</evidence>
<evidence type="ECO:0000312" key="5">
    <source>
        <dbReference type="EMBL" id="AAH90333.1"/>
    </source>
</evidence>
<evidence type="ECO:0000312" key="6">
    <source>
        <dbReference type="EMBL" id="AAI05614.1"/>
    </source>
</evidence>
<evidence type="ECO:0000312" key="7">
    <source>
        <dbReference type="RGD" id="1303052"/>
    </source>
</evidence>
<evidence type="ECO:0007744" key="8">
    <source>
        <dbReference type="PDB" id="4MEM"/>
    </source>
</evidence>
<evidence type="ECO:0007744" key="9">
    <source>
    </source>
</evidence>
<evidence type="ECO:0007829" key="10">
    <source>
        <dbReference type="PDB" id="4MEM"/>
    </source>
</evidence>
<reference key="1">
    <citation type="journal article" date="2004" name="Nature">
        <title>Genome sequence of the Brown Norway rat yields insights into mammalian evolution.</title>
        <authorList>
            <person name="Gibbs R.A."/>
            <person name="Weinstock G.M."/>
            <person name="Metzker M.L."/>
            <person name="Muzny D.M."/>
            <person name="Sodergren E.J."/>
            <person name="Scherer S."/>
            <person name="Scott G."/>
            <person name="Steffen D."/>
            <person name="Worley K.C."/>
            <person name="Burch P.E."/>
            <person name="Okwuonu G."/>
            <person name="Hines S."/>
            <person name="Lewis L."/>
            <person name="Deramo C."/>
            <person name="Delgado O."/>
            <person name="Dugan-Rocha S."/>
            <person name="Miner G."/>
            <person name="Morgan M."/>
            <person name="Hawes A."/>
            <person name="Gill R."/>
            <person name="Holt R.A."/>
            <person name="Adams M.D."/>
            <person name="Amanatides P.G."/>
            <person name="Baden-Tillson H."/>
            <person name="Barnstead M."/>
            <person name="Chin S."/>
            <person name="Evans C.A."/>
            <person name="Ferriera S."/>
            <person name="Fosler C."/>
            <person name="Glodek A."/>
            <person name="Gu Z."/>
            <person name="Jennings D."/>
            <person name="Kraft C.L."/>
            <person name="Nguyen T."/>
            <person name="Pfannkoch C.M."/>
            <person name="Sitter C."/>
            <person name="Sutton G.G."/>
            <person name="Venter J.C."/>
            <person name="Woodage T."/>
            <person name="Smith D."/>
            <person name="Lee H.-M."/>
            <person name="Gustafson E."/>
            <person name="Cahill P."/>
            <person name="Kana A."/>
            <person name="Doucette-Stamm L."/>
            <person name="Weinstock K."/>
            <person name="Fechtel K."/>
            <person name="Weiss R.B."/>
            <person name="Dunn D.M."/>
            <person name="Green E.D."/>
            <person name="Blakesley R.W."/>
            <person name="Bouffard G.G."/>
            <person name="De Jong P.J."/>
            <person name="Osoegawa K."/>
            <person name="Zhu B."/>
            <person name="Marra M."/>
            <person name="Schein J."/>
            <person name="Bosdet I."/>
            <person name="Fjell C."/>
            <person name="Jones S."/>
            <person name="Krzywinski M."/>
            <person name="Mathewson C."/>
            <person name="Siddiqui A."/>
            <person name="Wye N."/>
            <person name="McPherson J."/>
            <person name="Zhao S."/>
            <person name="Fraser C.M."/>
            <person name="Shetty J."/>
            <person name="Shatsman S."/>
            <person name="Geer K."/>
            <person name="Chen Y."/>
            <person name="Abramzon S."/>
            <person name="Nierman W.C."/>
            <person name="Havlak P.H."/>
            <person name="Chen R."/>
            <person name="Durbin K.J."/>
            <person name="Egan A."/>
            <person name="Ren Y."/>
            <person name="Song X.-Z."/>
            <person name="Li B."/>
            <person name="Liu Y."/>
            <person name="Qin X."/>
            <person name="Cawley S."/>
            <person name="Cooney A.J."/>
            <person name="D'Souza L.M."/>
            <person name="Martin K."/>
            <person name="Wu J.Q."/>
            <person name="Gonzalez-Garay M.L."/>
            <person name="Jackson A.R."/>
            <person name="Kalafus K.J."/>
            <person name="McLeod M.P."/>
            <person name="Milosavljevic A."/>
            <person name="Virk D."/>
            <person name="Volkov A."/>
            <person name="Wheeler D.A."/>
            <person name="Zhang Z."/>
            <person name="Bailey J.A."/>
            <person name="Eichler E.E."/>
            <person name="Tuzun E."/>
            <person name="Birney E."/>
            <person name="Mongin E."/>
            <person name="Ureta-Vidal A."/>
            <person name="Woodwark C."/>
            <person name="Zdobnov E."/>
            <person name="Bork P."/>
            <person name="Suyama M."/>
            <person name="Torrents D."/>
            <person name="Alexandersson M."/>
            <person name="Trask B.J."/>
            <person name="Young J.M."/>
            <person name="Huang H."/>
            <person name="Wang H."/>
            <person name="Xing H."/>
            <person name="Daniels S."/>
            <person name="Gietzen D."/>
            <person name="Schmidt J."/>
            <person name="Stevens K."/>
            <person name="Vitt U."/>
            <person name="Wingrove J."/>
            <person name="Camara F."/>
            <person name="Mar Alba M."/>
            <person name="Abril J.F."/>
            <person name="Guigo R."/>
            <person name="Smit A."/>
            <person name="Dubchak I."/>
            <person name="Rubin E.M."/>
            <person name="Couronne O."/>
            <person name="Poliakov A."/>
            <person name="Huebner N."/>
            <person name="Ganten D."/>
            <person name="Goesele C."/>
            <person name="Hummel O."/>
            <person name="Kreitler T."/>
            <person name="Lee Y.-A."/>
            <person name="Monti J."/>
            <person name="Schulz H."/>
            <person name="Zimdahl H."/>
            <person name="Himmelbauer H."/>
            <person name="Lehrach H."/>
            <person name="Jacob H.J."/>
            <person name="Bromberg S."/>
            <person name="Gullings-Handley J."/>
            <person name="Jensen-Seaman M.I."/>
            <person name="Kwitek A.E."/>
            <person name="Lazar J."/>
            <person name="Pasko D."/>
            <person name="Tonellato P.J."/>
            <person name="Twigger S."/>
            <person name="Ponting C.P."/>
            <person name="Duarte J.M."/>
            <person name="Rice S."/>
            <person name="Goodstadt L."/>
            <person name="Beatson S.A."/>
            <person name="Emes R.D."/>
            <person name="Winter E.E."/>
            <person name="Webber C."/>
            <person name="Brandt P."/>
            <person name="Nyakatura G."/>
            <person name="Adetobi M."/>
            <person name="Chiaromonte F."/>
            <person name="Elnitski L."/>
            <person name="Eswara P."/>
            <person name="Hardison R.C."/>
            <person name="Hou M."/>
            <person name="Kolbe D."/>
            <person name="Makova K."/>
            <person name="Miller W."/>
            <person name="Nekrutenko A."/>
            <person name="Riemer C."/>
            <person name="Schwartz S."/>
            <person name="Taylor J."/>
            <person name="Yang S."/>
            <person name="Zhang Y."/>
            <person name="Lindpaintner K."/>
            <person name="Andrews T.D."/>
            <person name="Caccamo M."/>
            <person name="Clamp M."/>
            <person name="Clarke L."/>
            <person name="Curwen V."/>
            <person name="Durbin R.M."/>
            <person name="Eyras E."/>
            <person name="Searle S.M."/>
            <person name="Cooper G.M."/>
            <person name="Batzoglou S."/>
            <person name="Brudno M."/>
            <person name="Sidow A."/>
            <person name="Stone E.A."/>
            <person name="Payseur B.A."/>
            <person name="Bourque G."/>
            <person name="Lopez-Otin C."/>
            <person name="Puente X.S."/>
            <person name="Chakrabarti K."/>
            <person name="Chatterji S."/>
            <person name="Dewey C."/>
            <person name="Pachter L."/>
            <person name="Bray N."/>
            <person name="Yap V.B."/>
            <person name="Caspi A."/>
            <person name="Tesler G."/>
            <person name="Pevzner P.A."/>
            <person name="Haussler D."/>
            <person name="Roskin K.M."/>
            <person name="Baertsch R."/>
            <person name="Clawson H."/>
            <person name="Furey T.S."/>
            <person name="Hinrichs A.S."/>
            <person name="Karolchik D."/>
            <person name="Kent W.J."/>
            <person name="Rosenbloom K.R."/>
            <person name="Trumbower H."/>
            <person name="Weirauch M."/>
            <person name="Cooper D.N."/>
            <person name="Stenson P.D."/>
            <person name="Ma B."/>
            <person name="Brent M."/>
            <person name="Arumugam M."/>
            <person name="Shteynberg D."/>
            <person name="Copley R.R."/>
            <person name="Taylor M.S."/>
            <person name="Riethman H."/>
            <person name="Mudunuri U."/>
            <person name="Peterson J."/>
            <person name="Guyer M."/>
            <person name="Felsenfeld A."/>
            <person name="Old S."/>
            <person name="Mockrin S."/>
            <person name="Collins F.S."/>
        </authorList>
    </citation>
    <scope>NUCLEOTIDE SEQUENCE [LARGE SCALE GENOMIC DNA]</scope>
    <source>
        <strain>Brown Norway</strain>
    </source>
</reference>
<reference key="2">
    <citation type="submission" date="2005-09" db="EMBL/GenBank/DDBJ databases">
        <authorList>
            <person name="Mural R.J."/>
            <person name="Adams M.D."/>
            <person name="Myers E.W."/>
            <person name="Smith H.O."/>
            <person name="Venter J.C."/>
        </authorList>
    </citation>
    <scope>NUCLEOTIDE SEQUENCE [LARGE SCALE GENOMIC DNA]</scope>
    <source>
        <strain>Brown Norway</strain>
    </source>
</reference>
<reference evidence="6" key="3">
    <citation type="journal article" date="2004" name="Genome Res.">
        <title>The status, quality, and expansion of the NIH full-length cDNA project: the Mammalian Gene Collection (MGC).</title>
        <authorList>
            <consortium name="The MGC Project Team"/>
        </authorList>
    </citation>
    <scope>NUCLEOTIDE SEQUENCE [LARGE SCALE MRNA]</scope>
    <source>
        <tissue evidence="6">Brain</tissue>
    </source>
</reference>
<reference key="4">
    <citation type="journal article" date="2012" name="Nat. Commun.">
        <title>Quantitative maps of protein phosphorylation sites across 14 different rat organs and tissues.</title>
        <authorList>
            <person name="Lundby A."/>
            <person name="Secher A."/>
            <person name="Lage K."/>
            <person name="Nordsborg N.B."/>
            <person name="Dmytriyev A."/>
            <person name="Lundby C."/>
            <person name="Olsen J.V."/>
        </authorList>
    </citation>
    <scope>PHOSPHORYLATION [LARGE SCALE ANALYSIS] AT SER-692</scope>
    <scope>IDENTIFICATION BY MASS SPECTROMETRY [LARGE SCALE ANALYSIS]</scope>
</reference>
<reference evidence="8" key="5">
    <citation type="journal article" date="2014" name="Biochemistry">
        <title>Structure and catalytic regulatory function of ubiquitin specific protease 11 N-terminal and ubiquitin-like domains.</title>
        <authorList>
            <person name="Harper S."/>
            <person name="Gratton H.E."/>
            <person name="Cornaciu I."/>
            <person name="Oberer M."/>
            <person name="Scott D.J."/>
            <person name="Emsley J."/>
            <person name="Dreveny I."/>
        </authorList>
    </citation>
    <scope>X-RAY CRYSTALLOGRAPHY (2.34 ANGSTROMS) OF 19-237</scope>
</reference>
<accession>Q5D006</accession>
<accession>F7FEA4</accession>
<accession>Q0D2L8</accession>
<protein>
    <recommendedName>
        <fullName>Ubiquitin carboxyl-terminal hydrolase 11</fullName>
        <ecNumber evidence="1">3.4.19.12</ecNumber>
    </recommendedName>
    <alternativeName>
        <fullName>Deubiquitinating enzyme 11</fullName>
    </alternativeName>
    <alternativeName>
        <fullName>Ubiquitin thioesterase 11</fullName>
    </alternativeName>
    <alternativeName>
        <fullName>Ubiquitin-specific-processing protease 11</fullName>
    </alternativeName>
</protein>
<gene>
    <name evidence="5 7" type="primary">Usp11</name>
</gene>
<sequence>MAAVAADPAAAAVPASAEDRETQPEAMPDLDQQWRQIGNGRERPLRAGESWFLVEKHWYKQWEAYVKGGDQDASTFPGSINNSGLFEDQISWHLRERLVEGDDYVLLPAPAWNYLVSWYGLKDDQPPIERKVIELPGIRKVEVYPIELLLVQHSDMETALTIQFSYSDSVDLVLQTAREQFLVEPQEDTRLWTKNSEGSLDRLCNTQITLLDACLETGQLVIMETRNKDGTWPSAQLCGMNNMPDEDEDFQGQPGICGLTNLGNTCFMNSALQCLSNVPQLTEYFLNNRYLEELNFRNPLGMKGELAEAYADLVKQTWSGYHRSIVPNVFKNKVGHFASQFLGYQQHDSQELLSFLLDGLHEDLNRVKKKEYVELCNGAGRPDLEVAQEAWQNHKRRNDSVIVDTFHGLFKSTLVCPDCGNVSVTFDPFCYLSVPLPVCSRRVLEVFFVPMDPRRKPEQHRVVVPKKGNISDLCVALSTHTSVAPDKMIVADVFSHRFYKLYQLEDPLSGILDRDDIFVYEVTGRIEPVEGSRDDIVVPVYLRERTPSRDYNNSYYGLILFGHPLLVSVPRDRFSWEGLYNILMYRLSRYVTKPTSDDDDGDEKGDENEDEDVEDDSSSEEEKEEMSGPTDNDGTQESEQEQAGTSSGVTGRCPSLLDNSLHTSQWPPRRRRKQLFTLQTVNSNGTSDRTTSPEEAQTQPYIAMDWEPEMKRRYYDEVEAEGYVKHDCVGYMLKKNPVQLKECIKLFTTVETLEKENPWYCSSCKQHQLATKKLDLWMLPEVLIIHLKRFSFSKFSREKLDTLVQFPIRDLDFSEFVIKPKNESAPDLYKYDLIAVSNHYGGMRDGHYTTFACNKDSGQWHYFDDNSVSPVNENQIESKAAYVLFYQRQDVGRRQSQTASSETPTSPASSSTPNSDIMDVN</sequence>